<dbReference type="EMBL" id="L13687">
    <property type="protein sequence ID" value="AAC37606.1"/>
    <property type="molecule type" value="mRNA"/>
</dbReference>
<dbReference type="EMBL" id="AF493888">
    <property type="protein sequence ID" value="AAM12602.1"/>
    <property type="molecule type" value="mRNA"/>
</dbReference>
<dbReference type="EMBL" id="CN338497">
    <property type="status" value="NOT_ANNOTATED_CDS"/>
    <property type="molecule type" value="mRNA"/>
</dbReference>
<dbReference type="EMBL" id="AP000436">
    <property type="status" value="NOT_ANNOTATED_CDS"/>
    <property type="molecule type" value="Genomic_DNA"/>
</dbReference>
<dbReference type="EMBL" id="CH471076">
    <property type="protein sequence ID" value="EAW74333.1"/>
    <property type="molecule type" value="Genomic_DNA"/>
</dbReference>
<dbReference type="EMBL" id="BC002530">
    <property type="protein sequence ID" value="AAH02530.1"/>
    <property type="molecule type" value="mRNA"/>
</dbReference>
<dbReference type="CCDS" id="CCDS55770.1">
    <molecule id="P36404-2"/>
</dbReference>
<dbReference type="CCDS" id="CCDS8088.1">
    <molecule id="P36404-1"/>
</dbReference>
<dbReference type="PIR" id="A48259">
    <property type="entry name" value="A48259"/>
</dbReference>
<dbReference type="RefSeq" id="NP_001186674.1">
    <molecule id="P36404-2"/>
    <property type="nucleotide sequence ID" value="NM_001199745.2"/>
</dbReference>
<dbReference type="RefSeq" id="NP_001658.2">
    <molecule id="P36404-1"/>
    <property type="nucleotide sequence ID" value="NM_001667.4"/>
</dbReference>
<dbReference type="PDB" id="3DOE">
    <property type="method" value="X-ray"/>
    <property type="resolution" value="2.25 A"/>
    <property type="chains" value="A=1-184"/>
</dbReference>
<dbReference type="PDB" id="3DOF">
    <property type="method" value="X-ray"/>
    <property type="resolution" value="3.30 A"/>
    <property type="chains" value="A=1-184"/>
</dbReference>
<dbReference type="PDBsum" id="3DOE"/>
<dbReference type="PDBsum" id="3DOF"/>
<dbReference type="SMR" id="P36404"/>
<dbReference type="BioGRID" id="106895">
    <property type="interactions" value="134"/>
</dbReference>
<dbReference type="CORUM" id="P36404"/>
<dbReference type="DIP" id="DIP-47535N"/>
<dbReference type="FunCoup" id="P36404">
    <property type="interactions" value="2351"/>
</dbReference>
<dbReference type="IntAct" id="P36404">
    <property type="interactions" value="49"/>
</dbReference>
<dbReference type="MINT" id="P36404"/>
<dbReference type="STRING" id="9606.ENSP00000246747"/>
<dbReference type="ChEMBL" id="CHEMBL4295751"/>
<dbReference type="iPTMnet" id="P36404"/>
<dbReference type="PhosphoSitePlus" id="P36404"/>
<dbReference type="SwissPalm" id="P36404"/>
<dbReference type="BioMuta" id="ARL2"/>
<dbReference type="DMDM" id="116241255"/>
<dbReference type="jPOST" id="P36404"/>
<dbReference type="MassIVE" id="P36404"/>
<dbReference type="PaxDb" id="9606-ENSP00000246747"/>
<dbReference type="PeptideAtlas" id="P36404"/>
<dbReference type="ProteomicsDB" id="32289"/>
<dbReference type="ProteomicsDB" id="55198">
    <molecule id="P36404-1"/>
</dbReference>
<dbReference type="Pumba" id="P36404"/>
<dbReference type="Antibodypedia" id="29583">
    <property type="antibodies" value="364 antibodies from 31 providers"/>
</dbReference>
<dbReference type="DNASU" id="402"/>
<dbReference type="Ensembl" id="ENST00000246747.9">
    <molecule id="P36404-1"/>
    <property type="protein sequence ID" value="ENSP00000246747.4"/>
    <property type="gene ID" value="ENSG00000213465.8"/>
</dbReference>
<dbReference type="Ensembl" id="ENST00000529384.5">
    <molecule id="P36404-1"/>
    <property type="protein sequence ID" value="ENSP00000436021.1"/>
    <property type="gene ID" value="ENSG00000213465.8"/>
</dbReference>
<dbReference type="Ensembl" id="ENST00000533729.1">
    <molecule id="P36404-2"/>
    <property type="protein sequence ID" value="ENSP00000432971.1"/>
    <property type="gene ID" value="ENSG00000213465.8"/>
</dbReference>
<dbReference type="GeneID" id="402"/>
<dbReference type="KEGG" id="hsa:402"/>
<dbReference type="MANE-Select" id="ENST00000246747.9">
    <property type="protein sequence ID" value="ENSP00000246747.4"/>
    <property type="RefSeq nucleotide sequence ID" value="NM_001667.4"/>
    <property type="RefSeq protein sequence ID" value="NP_001658.2"/>
</dbReference>
<dbReference type="UCSC" id="uc021qlc.2">
    <molecule id="P36404-1"/>
    <property type="organism name" value="human"/>
</dbReference>
<dbReference type="AGR" id="HGNC:693"/>
<dbReference type="CTD" id="402"/>
<dbReference type="DisGeNET" id="402"/>
<dbReference type="GeneCards" id="ARL2"/>
<dbReference type="HGNC" id="HGNC:693">
    <property type="gene designation" value="ARL2"/>
</dbReference>
<dbReference type="HPA" id="ENSG00000213465">
    <property type="expression patterns" value="Low tissue specificity"/>
</dbReference>
<dbReference type="MalaCards" id="ARL2"/>
<dbReference type="MIM" id="601175">
    <property type="type" value="gene"/>
</dbReference>
<dbReference type="MIM" id="619082">
    <property type="type" value="phenotype"/>
</dbReference>
<dbReference type="neXtProt" id="NX_P36404"/>
<dbReference type="OpenTargets" id="ENSG00000213465"/>
<dbReference type="PharmGKB" id="PA24986"/>
<dbReference type="VEuPathDB" id="HostDB:ENSG00000213465"/>
<dbReference type="eggNOG" id="KOG0073">
    <property type="taxonomic scope" value="Eukaryota"/>
</dbReference>
<dbReference type="GeneTree" id="ENSGT00940000157941"/>
<dbReference type="HOGENOM" id="CLU_040729_12_3_1"/>
<dbReference type="InParanoid" id="P36404"/>
<dbReference type="OMA" id="GMEWIVQ"/>
<dbReference type="OrthoDB" id="2011769at2759"/>
<dbReference type="PAN-GO" id="P36404">
    <property type="GO annotations" value="4 GO annotations based on evolutionary models"/>
</dbReference>
<dbReference type="PhylomeDB" id="P36404"/>
<dbReference type="TreeFam" id="TF105462"/>
<dbReference type="BRENDA" id="3.6.5.2">
    <property type="organism ID" value="2681"/>
</dbReference>
<dbReference type="PathwayCommons" id="P36404"/>
<dbReference type="Reactome" id="R-HSA-389977">
    <property type="pathway name" value="Post-chaperonin tubulin folding pathway"/>
</dbReference>
<dbReference type="Reactome" id="R-HSA-83936">
    <property type="pathway name" value="Transport of nucleosides and free purine and pyrimidine bases across the plasma membrane"/>
</dbReference>
<dbReference type="Reactome" id="R-HSA-9648002">
    <property type="pathway name" value="RAS processing"/>
</dbReference>
<dbReference type="SignaLink" id="P36404"/>
<dbReference type="BioGRID-ORCS" id="402">
    <property type="hits" value="807 hits in 1154 CRISPR screens"/>
</dbReference>
<dbReference type="CD-CODE" id="8C2F96ED">
    <property type="entry name" value="Centrosome"/>
</dbReference>
<dbReference type="EvolutionaryTrace" id="P36404"/>
<dbReference type="GeneWiki" id="ARL2"/>
<dbReference type="GenomeRNAi" id="402"/>
<dbReference type="Pharos" id="P36404">
    <property type="development level" value="Tbio"/>
</dbReference>
<dbReference type="PRO" id="PR:P36404"/>
<dbReference type="Proteomes" id="UP000005640">
    <property type="component" value="Chromosome 11"/>
</dbReference>
<dbReference type="RNAct" id="P36404">
    <property type="molecule type" value="protein"/>
</dbReference>
<dbReference type="Bgee" id="ENSG00000213465">
    <property type="expression patterns" value="Expressed in C1 segment of cervical spinal cord and 195 other cell types or tissues"/>
</dbReference>
<dbReference type="ExpressionAtlas" id="P36404">
    <property type="expression patterns" value="baseline and differential"/>
</dbReference>
<dbReference type="GO" id="GO:0005813">
    <property type="term" value="C:centrosome"/>
    <property type="evidence" value="ECO:0000314"/>
    <property type="project" value="UniProtKB"/>
</dbReference>
<dbReference type="GO" id="GO:0036064">
    <property type="term" value="C:ciliary basal body"/>
    <property type="evidence" value="ECO:0000314"/>
    <property type="project" value="HPA"/>
</dbReference>
<dbReference type="GO" id="GO:0005737">
    <property type="term" value="C:cytoplasm"/>
    <property type="evidence" value="ECO:0000318"/>
    <property type="project" value="GO_Central"/>
</dbReference>
<dbReference type="GO" id="GO:0005829">
    <property type="term" value="C:cytosol"/>
    <property type="evidence" value="ECO:0000304"/>
    <property type="project" value="Reactome"/>
</dbReference>
<dbReference type="GO" id="GO:0016328">
    <property type="term" value="C:lateral plasma membrane"/>
    <property type="evidence" value="ECO:0000250"/>
    <property type="project" value="UniProtKB"/>
</dbReference>
<dbReference type="GO" id="GO:0015630">
    <property type="term" value="C:microtubule cytoskeleton"/>
    <property type="evidence" value="ECO:0000318"/>
    <property type="project" value="GO_Central"/>
</dbReference>
<dbReference type="GO" id="GO:0005758">
    <property type="term" value="C:mitochondrial intermembrane space"/>
    <property type="evidence" value="ECO:0000314"/>
    <property type="project" value="UniProtKB"/>
</dbReference>
<dbReference type="GO" id="GO:0005759">
    <property type="term" value="C:mitochondrial matrix"/>
    <property type="evidence" value="ECO:0000304"/>
    <property type="project" value="Reactome"/>
</dbReference>
<dbReference type="GO" id="GO:0005739">
    <property type="term" value="C:mitochondrion"/>
    <property type="evidence" value="ECO:0000314"/>
    <property type="project" value="HPA"/>
</dbReference>
<dbReference type="GO" id="GO:0005730">
    <property type="term" value="C:nucleolus"/>
    <property type="evidence" value="ECO:0000314"/>
    <property type="project" value="HPA"/>
</dbReference>
<dbReference type="GO" id="GO:0005654">
    <property type="term" value="C:nucleoplasm"/>
    <property type="evidence" value="ECO:0000314"/>
    <property type="project" value="HPA"/>
</dbReference>
<dbReference type="GO" id="GO:0005634">
    <property type="term" value="C:nucleus"/>
    <property type="evidence" value="ECO:0000314"/>
    <property type="project" value="UniProtKB"/>
</dbReference>
<dbReference type="GO" id="GO:0019003">
    <property type="term" value="F:GDP binding"/>
    <property type="evidence" value="ECO:0007669"/>
    <property type="project" value="Ensembl"/>
</dbReference>
<dbReference type="GO" id="GO:0005525">
    <property type="term" value="F:GTP binding"/>
    <property type="evidence" value="ECO:0000315"/>
    <property type="project" value="UniProtKB"/>
</dbReference>
<dbReference type="GO" id="GO:0003924">
    <property type="term" value="F:GTPase activity"/>
    <property type="evidence" value="ECO:0000315"/>
    <property type="project" value="UniProtKB"/>
</dbReference>
<dbReference type="GO" id="GO:0070830">
    <property type="term" value="P:bicellular tight junction assembly"/>
    <property type="evidence" value="ECO:0000250"/>
    <property type="project" value="UniProtKB"/>
</dbReference>
<dbReference type="GO" id="GO:0007098">
    <property type="term" value="P:centrosome cycle"/>
    <property type="evidence" value="ECO:0000315"/>
    <property type="project" value="UniProtKB"/>
</dbReference>
<dbReference type="GO" id="GO:0051457">
    <property type="term" value="P:maintenance of protein location in nucleus"/>
    <property type="evidence" value="ECO:0000314"/>
    <property type="project" value="UniProtKB"/>
</dbReference>
<dbReference type="GO" id="GO:0034260">
    <property type="term" value="P:negative regulation of GTPase activity"/>
    <property type="evidence" value="ECO:0000314"/>
    <property type="project" value="UniProtKB"/>
</dbReference>
<dbReference type="GO" id="GO:0010811">
    <property type="term" value="P:positive regulation of cell-substrate adhesion"/>
    <property type="evidence" value="ECO:0000250"/>
    <property type="project" value="UniProtKB"/>
</dbReference>
<dbReference type="GO" id="GO:0031116">
    <property type="term" value="P:positive regulation of microtubule polymerization"/>
    <property type="evidence" value="ECO:0000314"/>
    <property type="project" value="UniProtKB"/>
</dbReference>
<dbReference type="GO" id="GO:0006457">
    <property type="term" value="P:protein folding"/>
    <property type="evidence" value="ECO:0000318"/>
    <property type="project" value="GO_Central"/>
</dbReference>
<dbReference type="GO" id="GO:1903715">
    <property type="term" value="P:regulation of aerobic respiration"/>
    <property type="evidence" value="ECO:0000315"/>
    <property type="project" value="UniProtKB"/>
</dbReference>
<dbReference type="GO" id="GO:0006110">
    <property type="term" value="P:regulation of glycolytic process"/>
    <property type="evidence" value="ECO:0000315"/>
    <property type="project" value="UniProtKB"/>
</dbReference>
<dbReference type="GO" id="GO:0031113">
    <property type="term" value="P:regulation of microtubule polymerization"/>
    <property type="evidence" value="ECO:0000315"/>
    <property type="project" value="UniProtKB"/>
</dbReference>
<dbReference type="CDD" id="cd04154">
    <property type="entry name" value="Arl2"/>
    <property type="match status" value="1"/>
</dbReference>
<dbReference type="FunFam" id="3.40.50.300:FF:000393">
    <property type="entry name" value="ADP-ribosylation factor-like 2, arl2"/>
    <property type="match status" value="1"/>
</dbReference>
<dbReference type="Gene3D" id="3.40.50.300">
    <property type="entry name" value="P-loop containing nucleotide triphosphate hydrolases"/>
    <property type="match status" value="1"/>
</dbReference>
<dbReference type="InterPro" id="IPR045873">
    <property type="entry name" value="Arl2"/>
</dbReference>
<dbReference type="InterPro" id="IPR044612">
    <property type="entry name" value="ARL2/3"/>
</dbReference>
<dbReference type="InterPro" id="IPR027417">
    <property type="entry name" value="P-loop_NTPase"/>
</dbReference>
<dbReference type="InterPro" id="IPR005225">
    <property type="entry name" value="Small_GTP-bd"/>
</dbReference>
<dbReference type="InterPro" id="IPR006689">
    <property type="entry name" value="Small_GTPase_ARF/SAR"/>
</dbReference>
<dbReference type="NCBIfam" id="TIGR00231">
    <property type="entry name" value="small_GTP"/>
    <property type="match status" value="1"/>
</dbReference>
<dbReference type="PANTHER" id="PTHR45697">
    <property type="entry name" value="ADP-RIBOSYLATION FACTOR-LIKE PROTEIN 2-RELATED"/>
    <property type="match status" value="1"/>
</dbReference>
<dbReference type="Pfam" id="PF00025">
    <property type="entry name" value="Arf"/>
    <property type="match status" value="1"/>
</dbReference>
<dbReference type="PRINTS" id="PR00328">
    <property type="entry name" value="SAR1GTPBP"/>
</dbReference>
<dbReference type="SMART" id="SM00177">
    <property type="entry name" value="ARF"/>
    <property type="match status" value="1"/>
</dbReference>
<dbReference type="SMART" id="SM00175">
    <property type="entry name" value="RAB"/>
    <property type="match status" value="1"/>
</dbReference>
<dbReference type="SMART" id="SM00178">
    <property type="entry name" value="SAR"/>
    <property type="match status" value="1"/>
</dbReference>
<dbReference type="SUPFAM" id="SSF52540">
    <property type="entry name" value="P-loop containing nucleoside triphosphate hydrolases"/>
    <property type="match status" value="1"/>
</dbReference>
<dbReference type="PROSITE" id="PS51417">
    <property type="entry name" value="ARF"/>
    <property type="match status" value="1"/>
</dbReference>
<sequence>MGLLTILKKMKQKERELRLLMLGLDNAGKTTILKKFNGEDIDTISPTLGFNIKTLEHRGFKLNIWDVGGQKSLRSYWRNYFESTDGLIWVVDSADRQRMQDCQRELQSLLVEERLAGATLLIFANKQDLPGALSSNAIREVLELDSIRSHHWCIQGCSAVTGENLLPGIDWLLDDISSRIFTAD</sequence>
<keyword id="KW-0002">3D-structure</keyword>
<keyword id="KW-0025">Alternative splicing</keyword>
<keyword id="KW-0898">Cataract</keyword>
<keyword id="KW-0131">Cell cycle</keyword>
<keyword id="KW-0963">Cytoplasm</keyword>
<keyword id="KW-0206">Cytoskeleton</keyword>
<keyword id="KW-0225">Disease variant</keyword>
<keyword id="KW-0342">GTP-binding</keyword>
<keyword id="KW-1017">Isopeptide bond</keyword>
<keyword id="KW-0449">Lipoprotein</keyword>
<keyword id="KW-0496">Mitochondrion</keyword>
<keyword id="KW-0519">Myristate</keyword>
<keyword id="KW-0547">Nucleotide-binding</keyword>
<keyword id="KW-0539">Nucleus</keyword>
<keyword id="KW-0597">Phosphoprotein</keyword>
<keyword id="KW-1267">Proteomics identification</keyword>
<keyword id="KW-1185">Reference proteome</keyword>
<keyword id="KW-0832">Ubl conjugation</keyword>
<feature type="initiator methionine" description="Removed" evidence="4">
    <location>
        <position position="1"/>
    </location>
</feature>
<feature type="chain" id="PRO_0000207453" description="ADP-ribosylation factor-like protein 2">
    <location>
        <begin position="2"/>
        <end position="184"/>
    </location>
</feature>
<feature type="binding site" evidence="1">
    <location>
        <begin position="23"/>
        <end position="30"/>
    </location>
    <ligand>
        <name>GTP</name>
        <dbReference type="ChEBI" id="CHEBI:37565"/>
    </ligand>
</feature>
<feature type="binding site" evidence="1">
    <location>
        <begin position="66"/>
        <end position="70"/>
    </location>
    <ligand>
        <name>GTP</name>
        <dbReference type="ChEBI" id="CHEBI:37565"/>
    </ligand>
</feature>
<feature type="binding site" evidence="1">
    <location>
        <position position="68"/>
    </location>
    <ligand>
        <name>GTP</name>
        <dbReference type="ChEBI" id="CHEBI:37565"/>
    </ligand>
</feature>
<feature type="binding site" evidence="1">
    <location>
        <begin position="125"/>
        <end position="128"/>
    </location>
    <ligand>
        <name>GTP</name>
        <dbReference type="ChEBI" id="CHEBI:37565"/>
    </ligand>
</feature>
<feature type="modified residue" description="Phosphoserine" evidence="3">
    <location>
        <position position="45"/>
    </location>
</feature>
<feature type="lipid moiety-binding region" description="N-myristoyl glycine" evidence="4">
    <location>
        <position position="2"/>
    </location>
</feature>
<feature type="cross-link" description="Glycyl lysine isopeptide (Lys-Gly) (interchain with G-Cter in ubiquitin)">
    <location>
        <position position="71"/>
    </location>
</feature>
<feature type="splice variant" id="VSP_047278" description="In isoform 2." evidence="21">
    <location>
        <begin position="113"/>
        <end position="139"/>
    </location>
</feature>
<feature type="sequence variant" id="VAR_085165" description="In MRCS1; decreased interaction with UNC119; decreased interaction with ARL2BP; changed cellular respiration; decreased ATP production." evidence="18">
    <original>R</original>
    <variation>L</variation>
    <location>
        <position position="15"/>
    </location>
</feature>
<feature type="sequence variant" id="VAR_028056" description="In dbSNP:rs664226." evidence="9 19 20">
    <original>V</original>
    <variation>A</variation>
    <location>
        <position position="141"/>
    </location>
</feature>
<feature type="mutagenesis site" description="Reduces interaction with ARL2BP." evidence="15">
    <original>L</original>
    <variation>A</variation>
    <location>
        <position position="3"/>
    </location>
</feature>
<feature type="mutagenesis site" description="Reduces interaction with ARL2BP." evidence="15">
    <original>L</original>
    <variation>D</variation>
    <location>
        <position position="3"/>
    </location>
</feature>
<feature type="mutagenesis site" description="Does not reduce interaction with ARL2BP." evidence="15">
    <original>L</original>
    <variation>A</variation>
    <location>
        <position position="4"/>
    </location>
</feature>
<feature type="mutagenesis site" description="Reduces interaction with ARL2BP." evidence="15">
    <original>L</original>
    <variation>D</variation>
    <location>
        <position position="4"/>
    </location>
</feature>
<feature type="mutagenesis site" description="Reduces interaction with ARL2BP." evidence="15">
    <original>I</original>
    <variation>R</variation>
    <location>
        <position position="6"/>
    </location>
</feature>
<feature type="mutagenesis site" description="Does not reduce interaction with ARL2BP." evidence="15">
    <original>L</original>
    <variation>A</variation>
    <location>
        <position position="7"/>
    </location>
</feature>
<feature type="mutagenesis site" description="Reduces interaction with ARL2BP." evidence="15">
    <original>L</original>
    <variation>D</variation>
    <location>
        <position position="7"/>
    </location>
</feature>
<feature type="mutagenesis site" description="Does not inhibit the interaction with TBCD and rescues the TBCD-induced microtubule destruction. Reduces interaction with ARL2BP. Inhibits accumulation of STAT3 in the nucleus." evidence="6 12">
    <original>T</original>
    <variation>N</variation>
    <location>
        <position position="30"/>
    </location>
</feature>
<feature type="mutagenesis site" description="Does not inhibit the interaction with TBCD and rescues the TBCD-induced microtubule destruction." evidence="6">
    <original>T</original>
    <variation>A</variation>
    <location>
        <position position="47"/>
    </location>
</feature>
<feature type="mutagenesis site" description="Reduces interaction with ARL2BP. Inhibits the interaction with TBCD and rescues the TBCD-induced microtubule destruction." evidence="6 15">
    <original>F</original>
    <variation>A</variation>
    <location>
        <position position="50"/>
    </location>
</feature>
<feature type="mutagenesis site" description="Induces cell cycle arrest, reduces ability to form microtubules and centrosome fragmentation. Inhibits the interaction with TBCD and does not rescue the TBCD-induced microtubule destruction. Interacts with ARL2BP and PDE6D." evidence="6 7 10 12">
    <original>Q</original>
    <variation>L</variation>
    <location>
        <position position="70"/>
    </location>
</feature>
<feature type="mutagenesis site" description="Does not reduce interaction with ARL2BP." evidence="15">
    <original>Y</original>
    <variation>A</variation>
    <location>
        <position position="76"/>
    </location>
</feature>
<feature type="mutagenesis site" description="Reduces interaction with ARL2BP." evidence="15">
    <original>Y</original>
    <variation>A</variation>
    <location>
        <position position="80"/>
    </location>
</feature>
<feature type="helix" evidence="24">
    <location>
        <begin position="3"/>
        <end position="9"/>
    </location>
</feature>
<feature type="strand" evidence="24">
    <location>
        <begin position="16"/>
        <end position="22"/>
    </location>
</feature>
<feature type="helix" evidence="24">
    <location>
        <begin position="29"/>
        <end position="37"/>
    </location>
</feature>
<feature type="strand" evidence="24">
    <location>
        <begin position="48"/>
        <end position="54"/>
    </location>
</feature>
<feature type="strand" evidence="24">
    <location>
        <begin position="60"/>
        <end position="67"/>
    </location>
</feature>
<feature type="helix" evidence="24">
    <location>
        <begin position="71"/>
        <end position="80"/>
    </location>
</feature>
<feature type="strand" evidence="24">
    <location>
        <begin position="85"/>
        <end position="92"/>
    </location>
</feature>
<feature type="helix" evidence="24">
    <location>
        <begin position="96"/>
        <end position="98"/>
    </location>
</feature>
<feature type="helix" evidence="24">
    <location>
        <begin position="99"/>
        <end position="110"/>
    </location>
</feature>
<feature type="helix" evidence="24">
    <location>
        <begin position="113"/>
        <end position="115"/>
    </location>
</feature>
<feature type="strand" evidence="24">
    <location>
        <begin position="119"/>
        <end position="125"/>
    </location>
</feature>
<feature type="helix" evidence="24">
    <location>
        <begin position="135"/>
        <end position="140"/>
    </location>
</feature>
<feature type="helix" evidence="24">
    <location>
        <begin position="141"/>
        <end position="146"/>
    </location>
</feature>
<feature type="strand" evidence="24">
    <location>
        <begin position="152"/>
        <end position="156"/>
    </location>
</feature>
<feature type="turn" evidence="24">
    <location>
        <begin position="159"/>
        <end position="162"/>
    </location>
</feature>
<feature type="helix" evidence="24">
    <location>
        <begin position="165"/>
        <end position="184"/>
    </location>
</feature>
<accession>P36404</accession>
<accession>G3V184</accession>
<accession>Q9BUK8</accession>
<comment type="function">
    <text evidence="6 10 12 13 16 18">Small GTP-binding protein which cycles between an inactive GDP-bound and an active GTP-bound form, and the rate of cycling is regulated by guanine nucleotide exchange factors (GEF) and GTPase-activating proteins (GAP). GTP-binding protein that does not act as an allosteric activator of the cholera toxin catalytic subunit. Regulates formation of new microtubules and centrosome integrity. Prevents the TBCD-induced microtubule destruction. Participates in association with TBCD, in the disassembly of the apical junction complexes. Antagonizes the effect of TBCD on epithelial cell detachment and tight and adherens junctions disassembly. Together with ARL2, plays a role in the nuclear translocation, retention and transcriptional activity of STAT3. Component of a regulated secretory pathway involved in Ca(2+)-dependent release of acetylcholine. Required for normal progress through the cell cycle (PubMed:10831612, PubMed:16525022, PubMed:18234692, PubMed:18588884, PubMed:20740604). Also regulates mitochondrial integrity and function (PubMed:30945270).</text>
</comment>
<comment type="subunit">
    <text evidence="5 6 7 8 11 12 14 15 17 18">Found in a complex with ARL2, ARL2BP and SLC25A6 (PubMed:30945270). Found in a complex with at least ARL2, PPP2CB, PPP2R1A, PPP2R2A, PPP2R5E and TBCD. Found in a complex with ARL2, ARL2BP and SLC25A4. The GTP-bound form interacts with PDE6D. Interacts with ELMOD2. The GTP-bound form interacts with ARL2BP. Interacts, preferentially in its GDP-bound state, with TBCD (PubMed:10488091, PubMed:10831612, PubMed:11303027, PubMed:11847227, PubMed:17452337, PubMed:18234692, PubMed:18981177, PubMed:19368893, PubMed:27666374). Interacts with UNC119.</text>
</comment>
<comment type="interaction">
    <interactant intactId="EBI-752365">
        <id>P36404</id>
    </interactant>
    <interactant intactId="EBI-3449344">
        <id>Q9Y2Y0</id>
        <label>ARL2BP</label>
    </interactant>
    <organismsDiffer>false</organismsDiffer>
    <experiments>27</experiments>
</comment>
<comment type="interaction">
    <interactant intactId="EBI-752365">
        <id>P36404</id>
    </interactant>
    <interactant intactId="EBI-2865388">
        <id>Q969G2</id>
        <label>LHX4</label>
    </interactant>
    <organismsDiffer>false</organismsDiffer>
    <experiments>3</experiments>
</comment>
<comment type="interaction">
    <interactant intactId="EBI-752365">
        <id>P36404</id>
    </interactant>
    <interactant intactId="EBI-712685">
        <id>O43924</id>
        <label>PDE6D</label>
    </interactant>
    <organismsDiffer>false</organismsDiffer>
    <experiments>19</experiments>
</comment>
<comment type="interaction">
    <interactant intactId="EBI-752365">
        <id>P36404</id>
    </interactant>
    <interactant intactId="EBI-356005">
        <id>Q9BTW9</id>
        <label>TBCD</label>
    </interactant>
    <organismsDiffer>false</organismsDiffer>
    <experiments>4</experiments>
</comment>
<comment type="interaction">
    <interactant intactId="EBI-752365">
        <id>P36404</id>
    </interactant>
    <interactant intactId="EBI-765729">
        <id>Q9BZK7</id>
        <label>TBL1XR1</label>
    </interactant>
    <organismsDiffer>false</organismsDiffer>
    <experiments>4</experiments>
</comment>
<comment type="interaction">
    <interactant intactId="EBI-752365">
        <id>P36404</id>
    </interactant>
    <interactant intactId="EBI-711260">
        <id>Q13432</id>
        <label>UNC119</label>
    </interactant>
    <organismsDiffer>false</organismsDiffer>
    <experiments>11</experiments>
</comment>
<comment type="subcellular location">
    <subcellularLocation>
        <location evidence="23">Mitochondrion intermembrane space</location>
    </subcellularLocation>
    <subcellularLocation>
        <location>Cytoplasm</location>
        <location>Cytoskeleton</location>
        <location>Microtubule organizing center</location>
        <location>Centrosome</location>
    </subcellularLocation>
    <subcellularLocation>
        <location>Nucleus</location>
    </subcellularLocation>
    <subcellularLocation>
        <location>Cytoplasm</location>
    </subcellularLocation>
    <text evidence="2">The complex formed with ARL2BP, ARL2 and SLC25A6 is expressed in mitochondria. The complex formed with ARL2BP, ARL2 and SLC25A4 is expressed in mitochondria (By similarity). Not detected in the Golgi, nucleus and on the mitotic spindle. Centrosome-associated throughout the cell cycle. Not detected to interphase microtubules.</text>
</comment>
<comment type="alternative products">
    <event type="alternative splicing"/>
    <isoform>
        <id>P36404-1</id>
        <name>1</name>
        <sequence type="displayed"/>
    </isoform>
    <isoform>
        <id>P36404-2</id>
        <name>2</name>
        <sequence type="described" ref="VSP_047278"/>
    </isoform>
</comment>
<comment type="PTM">
    <text>Not N-myristoylated.</text>
</comment>
<comment type="disease" evidence="18">
    <disease id="DI-05960">
        <name>Microcornea, rod-cone dystrophy, cataract, and posterior staphyloma 1</name>
        <acronym>MRCS1</acronym>
        <description>An autosomal dominant ocular disorder characterized by poor visual acuity in early childhood, due to congenital cataract and microcornea followed by rod-cone dystrophy, with later development of posterior staphyloma.</description>
        <dbReference type="MIM" id="619082"/>
    </disease>
    <text>The disease is caused by variants affecting the gene represented in this entry.</text>
</comment>
<comment type="similarity">
    <text evidence="22">Belongs to the small GTPase superfamily. Arf family.</text>
</comment>
<protein>
    <recommendedName>
        <fullName>ADP-ribosylation factor-like protein 2</fullName>
    </recommendedName>
</protein>
<organism>
    <name type="scientific">Homo sapiens</name>
    <name type="common">Human</name>
    <dbReference type="NCBI Taxonomy" id="9606"/>
    <lineage>
        <taxon>Eukaryota</taxon>
        <taxon>Metazoa</taxon>
        <taxon>Chordata</taxon>
        <taxon>Craniata</taxon>
        <taxon>Vertebrata</taxon>
        <taxon>Euteleostomi</taxon>
        <taxon>Mammalia</taxon>
        <taxon>Eutheria</taxon>
        <taxon>Euarchontoglires</taxon>
        <taxon>Primates</taxon>
        <taxon>Haplorrhini</taxon>
        <taxon>Catarrhini</taxon>
        <taxon>Hominidae</taxon>
        <taxon>Homo</taxon>
    </lineage>
</organism>
<reference key="1">
    <citation type="journal article" date="1993" name="Proc. Natl. Acad. Sci. U.S.A.">
        <title>Selective amplification of additional members of the ADP-ribosylation factor (ARF) family: cloning of additional human and Drosophila ARF-like genes.</title>
        <authorList>
            <person name="Clark J."/>
            <person name="Moore L."/>
            <person name="Krasinskas A."/>
            <person name="Way J."/>
            <person name="Battey J.F."/>
            <person name="Tamkun J.W."/>
            <person name="Kahn R.A."/>
        </authorList>
    </citation>
    <scope>NUCLEOTIDE SEQUENCE [MRNA] (ISOFORM 1)</scope>
    <scope>VARIANT ALA-141</scope>
</reference>
<reference key="2">
    <citation type="submission" date="1997-11" db="UniProtKB">
        <authorList>
            <person name="Kahn R.A."/>
        </authorList>
    </citation>
    <scope>SEQUENCE REVISION TO 11</scope>
</reference>
<reference key="3">
    <citation type="submission" date="2002-03" db="EMBL/GenBank/DDBJ databases">
        <title>cDNA clones of human proteins involved in signal transduction sequenced by the Guthrie cDNA resource center (www.cdna.org).</title>
        <authorList>
            <person name="Puhl H.L. III"/>
            <person name="Ikeda S.R."/>
            <person name="Aronstam R.S."/>
        </authorList>
    </citation>
    <scope>NUCLEOTIDE SEQUENCE [LARGE SCALE MRNA] (ISOFORM 1)</scope>
    <scope>VARIANT ALA-141</scope>
    <source>
        <tissue>Brain</tissue>
    </source>
</reference>
<reference key="4">
    <citation type="journal article" date="2004" name="Nat. Biotechnol.">
        <title>Transcriptome characterization elucidates signaling networks that control human ES cell growth and differentiation.</title>
        <authorList>
            <person name="Brandenberger R."/>
            <person name="Wei H."/>
            <person name="Zhang S."/>
            <person name="Lei S."/>
            <person name="Murage J."/>
            <person name="Fisk G.J."/>
            <person name="Li Y."/>
            <person name="Xu C."/>
            <person name="Fang R."/>
            <person name="Guegler K."/>
            <person name="Rao M.S."/>
            <person name="Mandalam R."/>
            <person name="Lebkowski J."/>
            <person name="Stanton L.W."/>
        </authorList>
    </citation>
    <scope>NUCLEOTIDE SEQUENCE [MRNA] (ISOFORM 2)</scope>
    <scope>VARIANT ALA-141</scope>
</reference>
<reference key="5">
    <citation type="journal article" date="2006" name="Nature">
        <title>Human chromosome 11 DNA sequence and analysis including novel gene identification.</title>
        <authorList>
            <person name="Taylor T.D."/>
            <person name="Noguchi H."/>
            <person name="Totoki Y."/>
            <person name="Toyoda A."/>
            <person name="Kuroki Y."/>
            <person name="Dewar K."/>
            <person name="Lloyd C."/>
            <person name="Itoh T."/>
            <person name="Takeda T."/>
            <person name="Kim D.-W."/>
            <person name="She X."/>
            <person name="Barlow K.F."/>
            <person name="Bloom T."/>
            <person name="Bruford E."/>
            <person name="Chang J.L."/>
            <person name="Cuomo C.A."/>
            <person name="Eichler E."/>
            <person name="FitzGerald M.G."/>
            <person name="Jaffe D.B."/>
            <person name="LaButti K."/>
            <person name="Nicol R."/>
            <person name="Park H.-S."/>
            <person name="Seaman C."/>
            <person name="Sougnez C."/>
            <person name="Yang X."/>
            <person name="Zimmer A.R."/>
            <person name="Zody M.C."/>
            <person name="Birren B.W."/>
            <person name="Nusbaum C."/>
            <person name="Fujiyama A."/>
            <person name="Hattori M."/>
            <person name="Rogers J."/>
            <person name="Lander E.S."/>
            <person name="Sakaki Y."/>
        </authorList>
    </citation>
    <scope>NUCLEOTIDE SEQUENCE [LARGE SCALE GENOMIC DNA]</scope>
</reference>
<reference key="6">
    <citation type="submission" date="2005-07" db="EMBL/GenBank/DDBJ databases">
        <authorList>
            <person name="Mural R.J."/>
            <person name="Istrail S."/>
            <person name="Sutton G.G."/>
            <person name="Florea L."/>
            <person name="Halpern A.L."/>
            <person name="Mobarry C.M."/>
            <person name="Lippert R."/>
            <person name="Walenz B."/>
            <person name="Shatkay H."/>
            <person name="Dew I."/>
            <person name="Miller J.R."/>
            <person name="Flanigan M.J."/>
            <person name="Edwards N.J."/>
            <person name="Bolanos R."/>
            <person name="Fasulo D."/>
            <person name="Halldorsson B.V."/>
            <person name="Hannenhalli S."/>
            <person name="Turner R."/>
            <person name="Yooseph S."/>
            <person name="Lu F."/>
            <person name="Nusskern D.R."/>
            <person name="Shue B.C."/>
            <person name="Zheng X.H."/>
            <person name="Zhong F."/>
            <person name="Delcher A.L."/>
            <person name="Huson D.H."/>
            <person name="Kravitz S.A."/>
            <person name="Mouchard L."/>
            <person name="Reinert K."/>
            <person name="Remington K.A."/>
            <person name="Clark A.G."/>
            <person name="Waterman M.S."/>
            <person name="Eichler E.E."/>
            <person name="Adams M.D."/>
            <person name="Hunkapiller M.W."/>
            <person name="Myers E.W."/>
            <person name="Venter J.C."/>
        </authorList>
    </citation>
    <scope>NUCLEOTIDE SEQUENCE [LARGE SCALE GENOMIC DNA]</scope>
</reference>
<reference key="7">
    <citation type="journal article" date="2004" name="Genome Res.">
        <title>The status, quality, and expansion of the NIH full-length cDNA project: the Mammalian Gene Collection (MGC).</title>
        <authorList>
            <consortium name="The MGC Project Team"/>
        </authorList>
    </citation>
    <scope>NUCLEOTIDE SEQUENCE [LARGE SCALE MRNA] (ISOFORM 1)</scope>
    <source>
        <tissue>Placenta</tissue>
    </source>
</reference>
<reference key="8">
    <citation type="journal article" date="1999" name="J. Biol. Chem.">
        <title>The ARF-like 2 (ARL2)-binding protein, BART. Purification, cloning, and initial characterization.</title>
        <authorList>
            <person name="Sharer J.D."/>
            <person name="Kahn R.A."/>
        </authorList>
    </citation>
    <scope>INTERACTION WITH ARL2BP</scope>
</reference>
<reference key="9">
    <citation type="journal article" date="2000" name="J. Cell Biol.">
        <title>ADP ribosylation factor-like protein 2 (Arl2) regulates the interaction of tubulin-folding cofactor D with native tubulin.</title>
        <authorList>
            <person name="Bhamidipati A."/>
            <person name="Lewis S.A."/>
            <person name="Cowan N.J."/>
        </authorList>
    </citation>
    <scope>FUNCTION</scope>
    <scope>INTERACTION WITH TBCD</scope>
    <scope>MUTAGENESIS OF THR-30; THR-47; PHE-50 AND GLN-70</scope>
</reference>
<reference key="10">
    <citation type="journal article" date="2001" name="J. Biol. Chem.">
        <title>ADP-ribosylation factors (ARFs) and ARF-like 1 (ARL1) have both specific and shared effectors: characterizing ARL1-binding proteins.</title>
        <authorList>
            <person name="Van Valkenburgh H."/>
            <person name="Shern J.F."/>
            <person name="Sharer J.D."/>
            <person name="Zhu X."/>
            <person name="Kahn R.A."/>
        </authorList>
    </citation>
    <scope>INTERACTION WITH ARL2BP AND PDE6D</scope>
    <scope>MUTAGENESIS OF GLN-70</scope>
</reference>
<reference key="11">
    <citation type="journal article" date="2002" name="J. Biol. Chem.">
        <title>Functional overlap between retinitis pigmentosa 2 protein and the tubulin-specific chaperone cofactor C.</title>
        <authorList>
            <person name="Bartolini F."/>
            <person name="Bhamidipati A."/>
            <person name="Thomas S."/>
            <person name="Schwahn U."/>
            <person name="Lewis S.A."/>
            <person name="Cowan N.J."/>
        </authorList>
    </citation>
    <scope>INTERACTION WITH ARL2BP</scope>
</reference>
<reference key="12">
    <citation type="journal article" date="2002" name="Mol. Biol. Cell">
        <title>ARL2 and BART enter mitochondria and bind the adenine nucleotide transporter.</title>
        <authorList>
            <person name="Sharer J.D."/>
            <person name="Shern J.F."/>
            <person name="Van Valkenburgh H."/>
            <person name="Wallace D.C."/>
            <person name="Kahn R.A."/>
        </authorList>
    </citation>
    <scope>SUBCELLULAR LOCATION</scope>
    <scope>LACK OF N-MYRISTOYLATION</scope>
</reference>
<reference key="13">
    <citation type="journal article" date="2006" name="Mol. Biol. Cell">
        <title>Arl2 and Arl3 regulate different microtubule-dependent processes.</title>
        <authorList>
            <person name="Zhou C."/>
            <person name="Cunningham L."/>
            <person name="Marcus A.I."/>
            <person name="Li Y."/>
            <person name="Kahn R.A."/>
        </authorList>
    </citation>
    <scope>FUNCTION</scope>
    <scope>MUTAGENESIS OF GLN-70</scope>
    <scope>SUBCELLULAR LOCATION</scope>
</reference>
<reference key="14">
    <citation type="journal article" date="2007" name="J. Biol. Chem.">
        <title>ELMOD2 is an Arl2 GTPase-activating protein that also acts on Arfs.</title>
        <authorList>
            <person name="Bowzard J.B."/>
            <person name="Cheng D."/>
            <person name="Peng J."/>
            <person name="Kahn R.A."/>
        </authorList>
    </citation>
    <scope>INTERACTION WITH ELMOD2</scope>
</reference>
<reference key="15">
    <citation type="journal article" date="2008" name="FEBS Lett.">
        <title>Specificity of Arl2/Arl3 signaling is mediated by a ternary Arl3-effector-GAP complex.</title>
        <authorList>
            <person name="Veltel S."/>
            <person name="Kravchenko A."/>
            <person name="Ismail S."/>
            <person name="Wittinghofer A."/>
        </authorList>
    </citation>
    <scope>FUNCTION</scope>
    <scope>GTP/GDP BINDING</scope>
</reference>
<reference key="16">
    <citation type="journal article" date="2008" name="Int. Immunol.">
        <title>BART is essential for nuclear retention of STAT3.</title>
        <authorList>
            <person name="Muromoto R."/>
            <person name="Sekine Y."/>
            <person name="Imoto S."/>
            <person name="Ikeda O."/>
            <person name="Okayama T."/>
            <person name="Sato N."/>
            <person name="Matsuda T."/>
        </authorList>
    </citation>
    <scope>FUNCTION</scope>
    <scope>INTERACTION WITH ARL2BP</scope>
    <scope>MUTAGENESIS OF THR-30 AND GLN-70</scope>
    <scope>SUBCELLULAR LOCATION</scope>
</reference>
<reference key="17">
    <citation type="journal article" date="2009" name="J. Biol. Chem.">
        <title>The structure of binder of Arl2 (BART) reveals a novel G protein binding domain: implications for function.</title>
        <authorList>
            <person name="Bailey L.K."/>
            <person name="Campbell L.J."/>
            <person name="Evetts K.A."/>
            <person name="Littlefield K."/>
            <person name="Rajendra E."/>
            <person name="Nietlispach D."/>
            <person name="Owen D."/>
            <person name="Mott H.R."/>
        </authorList>
    </citation>
    <scope>INTERACTION WITH ARL2BP</scope>
</reference>
<reference key="18">
    <citation type="journal article" date="2010" name="Cytoskeleton">
        <title>Effect of TBCD and its regulatory interactor Arl2 on tubulin and microtubule integrity.</title>
        <authorList>
            <person name="Tian G."/>
            <person name="Thomas S."/>
            <person name="Cowan N.J."/>
        </authorList>
    </citation>
    <scope>FUNCTION</scope>
</reference>
<reference key="19">
    <citation type="journal article" date="2011" name="BMC Syst. Biol.">
        <title>Initial characterization of the human central proteome.</title>
        <authorList>
            <person name="Burkard T.R."/>
            <person name="Planyavsky M."/>
            <person name="Kaupe I."/>
            <person name="Breitwieser F.P."/>
            <person name="Buerckstuemmer T."/>
            <person name="Bennett K.L."/>
            <person name="Superti-Furga G."/>
            <person name="Colinge J."/>
        </authorList>
    </citation>
    <scope>IDENTIFICATION BY MASS SPECTROMETRY [LARGE SCALE ANALYSIS]</scope>
</reference>
<reference key="20">
    <citation type="journal article" date="2016" name="Am. J. Hum. Genet.">
        <title>Biallelic TBCD mutations cause early-onset neurodegenerative encephalopathy.</title>
        <authorList>
            <person name="Miyake N."/>
            <person name="Fukai R."/>
            <person name="Ohba C."/>
            <person name="Chihara T."/>
            <person name="Miura M."/>
            <person name="Shimizu H."/>
            <person name="Kakita A."/>
            <person name="Imagawa E."/>
            <person name="Shiina M."/>
            <person name="Ogata K."/>
            <person name="Okuno-Yuguchi J."/>
            <person name="Fueki N."/>
            <person name="Ogiso Y."/>
            <person name="Suzumura H."/>
            <person name="Watabe Y."/>
            <person name="Imataka G."/>
            <person name="Leong H.Y."/>
            <person name="Fattal-Valevski A."/>
            <person name="Kramer U."/>
            <person name="Miyatake S."/>
            <person name="Kato M."/>
            <person name="Okamoto N."/>
            <person name="Sato Y."/>
            <person name="Mitsuhashi S."/>
            <person name="Nishino I."/>
            <person name="Kaneko N."/>
            <person name="Nishiyama A."/>
            <person name="Tamura T."/>
            <person name="Mizuguchi T."/>
            <person name="Nakashima M."/>
            <person name="Tanaka F."/>
            <person name="Saitsu H."/>
            <person name="Matsumoto N."/>
        </authorList>
    </citation>
    <scope>INTERACTION WITH TBCD</scope>
</reference>
<reference key="21">
    <citation type="journal article" date="2019" name="Clin. Genet.">
        <title>Whole-exome sequencing identified ARL2 as a novel candidate gene for MRCS (microcornea, rod-cone dystrophy, cataract, and posterior staphyloma) syndrome.</title>
        <authorList>
            <person name="Cai X.B."/>
            <person name="Wu K.C."/>
            <person name="Zhang X."/>
            <person name="Lv J.N."/>
            <person name="Jin G.H."/>
            <person name="Xiang L."/>
            <person name="Chen J."/>
            <person name="Huang X.F."/>
            <person name="Pan D."/>
            <person name="Lu B."/>
            <person name="Lu F."/>
            <person name="Qu J."/>
            <person name="Jin Z.B."/>
        </authorList>
    </citation>
    <scope>INVOLVEMENT IN MRCS1</scope>
    <scope>VARIANT MRCS1 LEU-15</scope>
    <scope>CHARACTERIZATION OF VARIANT MRCS1 LEU-15</scope>
    <scope>FUNCTION</scope>
    <scope>INTERACTION WITH UNC119</scope>
    <scope>INTERACTION WITH ARL2BP</scope>
    <scope>SUBCELLULAR LOCATION</scope>
</reference>
<reference key="22">
    <citation type="journal article" date="2009" name="Structure">
        <title>Crystal structure of the ARL2-GTP-BART complex reveals a novel recognition and binding mode of small GTPase with effector.</title>
        <authorList>
            <person name="Zhang T."/>
            <person name="Li S."/>
            <person name="Zhang Y."/>
            <person name="Zhong C."/>
            <person name="Lai Z."/>
            <person name="Ding J."/>
        </authorList>
    </citation>
    <scope>X-RAY CRYSTALLOGRAPHY (2.25 ANGSTROMS) OF 1-184 IN A COMPLEX WITH ARL2BP; GTP AND MAGNESIUM IONS</scope>
    <scope>INTERACTION WITH ARL2BP</scope>
    <scope>MUTAGENESIS OF LEU-3; LEU-4; ILE-6; LEU-7; PHE-50; TYR-76 AND TYR-80</scope>
</reference>
<gene>
    <name type="primary">ARL2</name>
</gene>
<name>ARL2_HUMAN</name>
<proteinExistence type="evidence at protein level"/>
<evidence type="ECO:0000250" key="1"/>
<evidence type="ECO:0000250" key="2">
    <source>
        <dbReference type="UniProtKB" id="O08697"/>
    </source>
</evidence>
<evidence type="ECO:0000250" key="3">
    <source>
        <dbReference type="UniProtKB" id="Q9D0J4"/>
    </source>
</evidence>
<evidence type="ECO:0000255" key="4"/>
<evidence type="ECO:0000269" key="5">
    <source>
    </source>
</evidence>
<evidence type="ECO:0000269" key="6">
    <source>
    </source>
</evidence>
<evidence type="ECO:0000269" key="7">
    <source>
    </source>
</evidence>
<evidence type="ECO:0000269" key="8">
    <source>
    </source>
</evidence>
<evidence type="ECO:0000269" key="9">
    <source>
    </source>
</evidence>
<evidence type="ECO:0000269" key="10">
    <source>
    </source>
</evidence>
<evidence type="ECO:0000269" key="11">
    <source>
    </source>
</evidence>
<evidence type="ECO:0000269" key="12">
    <source>
    </source>
</evidence>
<evidence type="ECO:0000269" key="13">
    <source>
    </source>
</evidence>
<evidence type="ECO:0000269" key="14">
    <source>
    </source>
</evidence>
<evidence type="ECO:0000269" key="15">
    <source>
    </source>
</evidence>
<evidence type="ECO:0000269" key="16">
    <source>
    </source>
</evidence>
<evidence type="ECO:0000269" key="17">
    <source>
    </source>
</evidence>
<evidence type="ECO:0000269" key="18">
    <source>
    </source>
</evidence>
<evidence type="ECO:0000269" key="19">
    <source>
    </source>
</evidence>
<evidence type="ECO:0000269" key="20">
    <source ref="3"/>
</evidence>
<evidence type="ECO:0000303" key="21">
    <source>
    </source>
</evidence>
<evidence type="ECO:0000305" key="22"/>
<evidence type="ECO:0000305" key="23">
    <source>
    </source>
</evidence>
<evidence type="ECO:0007829" key="24">
    <source>
        <dbReference type="PDB" id="3DOE"/>
    </source>
</evidence>